<name>SERB_VIBCH</name>
<keyword id="KW-0002">3D-structure</keyword>
<keyword id="KW-0028">Amino-acid biosynthesis</keyword>
<keyword id="KW-0378">Hydrolase</keyword>
<keyword id="KW-0460">Magnesium</keyword>
<keyword id="KW-0479">Metal-binding</keyword>
<keyword id="KW-1185">Reference proteome</keyword>
<keyword id="KW-0718">Serine biosynthesis</keyword>
<accession>Q9KPM2</accession>
<reference evidence="6" key="1">
    <citation type="journal article" date="2000" name="Nature">
        <title>DNA sequence of both chromosomes of the cholera pathogen Vibrio cholerae.</title>
        <authorList>
            <person name="Heidelberg J.F."/>
            <person name="Eisen J.A."/>
            <person name="Nelson W.C."/>
            <person name="Clayton R.A."/>
            <person name="Gwinn M.L."/>
            <person name="Dodson R.J."/>
            <person name="Haft D.H."/>
            <person name="Hickey E.K."/>
            <person name="Peterson J.D."/>
            <person name="Umayam L.A."/>
            <person name="Gill S.R."/>
            <person name="Nelson K.E."/>
            <person name="Read T.D."/>
            <person name="Tettelin H."/>
            <person name="Richardson D.L."/>
            <person name="Ermolaeva M.D."/>
            <person name="Vamathevan J.J."/>
            <person name="Bass S."/>
            <person name="Qin H."/>
            <person name="Dragoi I."/>
            <person name="Sellers P."/>
            <person name="McDonald L.A."/>
            <person name="Utterback T.R."/>
            <person name="Fleischmann R.D."/>
            <person name="Nierman W.C."/>
            <person name="White O."/>
            <person name="Salzberg S.L."/>
            <person name="Smith H.O."/>
            <person name="Colwell R.R."/>
            <person name="Mekalanos J.J."/>
            <person name="Venter J.C."/>
            <person name="Fraser C.M."/>
        </authorList>
    </citation>
    <scope>NUCLEOTIDE SEQUENCE [LARGE SCALE GENOMIC DNA]</scope>
    <source>
        <strain evidence="6">ATCC 39315 / El Tor Inaba N16961</strain>
    </source>
</reference>
<reference evidence="3" key="2">
    <citation type="journal article" date="2015" name="Proc. Natl. Acad. Sci. U.S.A.">
        <title>Panoramic view of a superfamily of phosphatases through substrate profiling.</title>
        <authorList>
            <person name="Huang H."/>
            <person name="Pandya C."/>
            <person name="Liu C."/>
            <person name="Al-Obaidi N.F."/>
            <person name="Wang M."/>
            <person name="Zheng L."/>
            <person name="Toews Keating S."/>
            <person name="Aono M."/>
            <person name="Love J.D."/>
            <person name="Evans B."/>
            <person name="Seidel R.D."/>
            <person name="Hillerich B.S."/>
            <person name="Garforth S.J."/>
            <person name="Almo S.C."/>
            <person name="Mariano P.S."/>
            <person name="Dunaway-Mariano D."/>
            <person name="Allen K.N."/>
            <person name="Farelli J.D."/>
        </authorList>
    </citation>
    <scope>CATALYTIC ACTIVITY</scope>
    <scope>COFACTOR</scope>
</reference>
<reference evidence="7" key="3">
    <citation type="submission" date="2010-05" db="PDB data bank">
        <title>Crystal structure of phosphoserine phosphatase from Vibrio cholerae.</title>
        <authorList>
            <person name="Patskovsky Y."/>
            <person name="Ramagopal U."/>
            <person name="Toro R."/>
            <person name="Rutter M."/>
            <person name="Miller S."/>
            <person name="Sauder J.M."/>
            <person name="Burley S.K."/>
            <person name="Almo S.C."/>
        </authorList>
    </citation>
    <scope>X-RAY CRYSTALLOGRAPHY (2.30 ANGSTROMS) OF 4-327</scope>
</reference>
<feature type="chain" id="PRO_0000435470" description="Phosphoserine phosphatase" evidence="3">
    <location>
        <begin position="1"/>
        <end position="328"/>
    </location>
</feature>
<feature type="active site" description="Nucleophile" evidence="1">
    <location>
        <position position="113"/>
    </location>
</feature>
<feature type="active site" description="Proton donor" evidence="1">
    <location>
        <position position="115"/>
    </location>
</feature>
<feature type="binding site" evidence="1">
    <location>
        <position position="113"/>
    </location>
    <ligand>
        <name>Mg(2+)</name>
        <dbReference type="ChEBI" id="CHEBI:18420"/>
    </ligand>
</feature>
<feature type="binding site" evidence="1">
    <location>
        <position position="115"/>
    </location>
    <ligand>
        <name>Mg(2+)</name>
        <dbReference type="ChEBI" id="CHEBI:18420"/>
    </ligand>
</feature>
<feature type="binding site" evidence="1">
    <location>
        <position position="122"/>
    </location>
    <ligand>
        <name>substrate</name>
    </ligand>
</feature>
<feature type="binding site" evidence="1">
    <location>
        <position position="158"/>
    </location>
    <ligand>
        <name>substrate</name>
    </ligand>
</feature>
<feature type="binding site" evidence="1">
    <location>
        <begin position="201"/>
        <end position="202"/>
    </location>
    <ligand>
        <name>substrate</name>
    </ligand>
</feature>
<feature type="binding site" evidence="1">
    <location>
        <position position="246"/>
    </location>
    <ligand>
        <name>substrate</name>
    </ligand>
</feature>
<feature type="binding site" evidence="1">
    <location>
        <position position="269"/>
    </location>
    <ligand>
        <name>Mg(2+)</name>
        <dbReference type="ChEBI" id="CHEBI:18420"/>
    </ligand>
</feature>
<feature type="binding site" evidence="1">
    <location>
        <position position="272"/>
    </location>
    <ligand>
        <name>substrate</name>
    </ligand>
</feature>
<feature type="helix" evidence="8">
    <location>
        <begin position="4"/>
        <end position="6"/>
    </location>
</feature>
<feature type="helix" evidence="8">
    <location>
        <begin position="15"/>
        <end position="18"/>
    </location>
</feature>
<feature type="helix" evidence="8">
    <location>
        <begin position="23"/>
        <end position="25"/>
    </location>
</feature>
<feature type="strand" evidence="8">
    <location>
        <begin position="28"/>
        <end position="30"/>
    </location>
</feature>
<feature type="helix" evidence="8">
    <location>
        <begin position="32"/>
        <end position="34"/>
    </location>
</feature>
<feature type="strand" evidence="8">
    <location>
        <begin position="37"/>
        <end position="42"/>
    </location>
</feature>
<feature type="helix" evidence="8">
    <location>
        <begin position="46"/>
        <end position="56"/>
    </location>
</feature>
<feature type="strand" evidence="8">
    <location>
        <begin position="62"/>
        <end position="68"/>
    </location>
</feature>
<feature type="strand" evidence="8">
    <location>
        <begin position="71"/>
        <end position="78"/>
    </location>
</feature>
<feature type="helix" evidence="8">
    <location>
        <begin position="82"/>
        <end position="91"/>
    </location>
</feature>
<feature type="strand" evidence="8">
    <location>
        <begin position="94"/>
        <end position="97"/>
    </location>
</feature>
<feature type="strand" evidence="8">
    <location>
        <begin position="109"/>
        <end position="112"/>
    </location>
</feature>
<feature type="helix" evidence="8">
    <location>
        <begin position="117"/>
        <end position="131"/>
    </location>
</feature>
<feature type="helix" evidence="8">
    <location>
        <begin position="134"/>
        <end position="145"/>
    </location>
</feature>
<feature type="helix" evidence="8">
    <location>
        <begin position="151"/>
        <end position="160"/>
    </location>
</feature>
<feature type="turn" evidence="8">
    <location>
        <begin position="161"/>
        <end position="164"/>
    </location>
</feature>
<feature type="helix" evidence="8">
    <location>
        <begin position="169"/>
        <end position="174"/>
    </location>
</feature>
<feature type="helix" evidence="8">
    <location>
        <begin position="183"/>
        <end position="192"/>
    </location>
</feature>
<feature type="strand" evidence="8">
    <location>
        <begin position="196"/>
        <end position="204"/>
    </location>
</feature>
<feature type="helix" evidence="8">
    <location>
        <begin position="205"/>
        <end position="215"/>
    </location>
</feature>
<feature type="strand" evidence="8">
    <location>
        <begin position="218"/>
        <end position="228"/>
    </location>
</feature>
<feature type="strand" evidence="8">
    <location>
        <begin position="231"/>
        <end position="238"/>
    </location>
</feature>
<feature type="helix" evidence="8">
    <location>
        <begin position="243"/>
        <end position="257"/>
    </location>
</feature>
<feature type="helix" evidence="8">
    <location>
        <begin position="261"/>
        <end position="263"/>
    </location>
</feature>
<feature type="strand" evidence="8">
    <location>
        <begin position="264"/>
        <end position="268"/>
    </location>
</feature>
<feature type="helix" evidence="8">
    <location>
        <begin position="271"/>
        <end position="273"/>
    </location>
</feature>
<feature type="helix" evidence="8">
    <location>
        <begin position="274"/>
        <end position="279"/>
    </location>
</feature>
<feature type="strand" evidence="8">
    <location>
        <begin position="280"/>
        <end position="287"/>
    </location>
</feature>
<feature type="helix" evidence="8">
    <location>
        <begin position="290"/>
        <end position="293"/>
    </location>
</feature>
<feature type="strand" evidence="8">
    <location>
        <begin position="296"/>
        <end position="303"/>
    </location>
</feature>
<feature type="helix" evidence="8">
    <location>
        <begin position="306"/>
        <end position="318"/>
    </location>
</feature>
<dbReference type="EC" id="3.1.3.3" evidence="2"/>
<dbReference type="EMBL" id="AE003852">
    <property type="protein sequence ID" value="AAF95488.1"/>
    <property type="molecule type" value="Genomic_DNA"/>
</dbReference>
<dbReference type="PIR" id="A82087">
    <property type="entry name" value="A82087"/>
</dbReference>
<dbReference type="RefSeq" id="NP_231975.1">
    <property type="nucleotide sequence ID" value="NC_002505.1"/>
</dbReference>
<dbReference type="PDB" id="3N28">
    <property type="method" value="X-ray"/>
    <property type="resolution" value="2.30 A"/>
    <property type="chains" value="A=4-327"/>
</dbReference>
<dbReference type="PDBsum" id="3N28"/>
<dbReference type="SMR" id="Q9KPM2"/>
<dbReference type="STRING" id="243277.VC_2345"/>
<dbReference type="DNASU" id="2613141"/>
<dbReference type="EnsemblBacteria" id="AAF95488">
    <property type="protein sequence ID" value="AAF95488"/>
    <property type="gene ID" value="VC_2345"/>
</dbReference>
<dbReference type="KEGG" id="vch:VC_2345"/>
<dbReference type="PATRIC" id="fig|243277.26.peg.2232"/>
<dbReference type="eggNOG" id="COG0560">
    <property type="taxonomic scope" value="Bacteria"/>
</dbReference>
<dbReference type="HOGENOM" id="CLU_036368_4_0_6"/>
<dbReference type="UniPathway" id="UPA00135">
    <property type="reaction ID" value="UER00198"/>
</dbReference>
<dbReference type="EvolutionaryTrace" id="Q9KPM2"/>
<dbReference type="Proteomes" id="UP000000584">
    <property type="component" value="Chromosome 1"/>
</dbReference>
<dbReference type="GO" id="GO:0005737">
    <property type="term" value="C:cytoplasm"/>
    <property type="evidence" value="ECO:0000318"/>
    <property type="project" value="GO_Central"/>
</dbReference>
<dbReference type="GO" id="GO:0036424">
    <property type="term" value="F:L-phosphoserine phosphatase activity"/>
    <property type="evidence" value="ECO:0000318"/>
    <property type="project" value="GO_Central"/>
</dbReference>
<dbReference type="GO" id="GO:0000287">
    <property type="term" value="F:magnesium ion binding"/>
    <property type="evidence" value="ECO:0000318"/>
    <property type="project" value="GO_Central"/>
</dbReference>
<dbReference type="GO" id="GO:0006564">
    <property type="term" value="P:L-serine biosynthetic process"/>
    <property type="evidence" value="ECO:0000318"/>
    <property type="project" value="GO_Central"/>
</dbReference>
<dbReference type="CDD" id="cd07500">
    <property type="entry name" value="HAD_PSP"/>
    <property type="match status" value="1"/>
</dbReference>
<dbReference type="FunFam" id="1.10.150.210:FF:000001">
    <property type="entry name" value="Phosphoserine phosphatase"/>
    <property type="match status" value="1"/>
</dbReference>
<dbReference type="FunFam" id="3.40.50.1000:FF:000048">
    <property type="entry name" value="Phosphoserine phosphatase"/>
    <property type="match status" value="1"/>
</dbReference>
<dbReference type="Gene3D" id="3.30.70.2020">
    <property type="match status" value="1"/>
</dbReference>
<dbReference type="Gene3D" id="3.40.50.1000">
    <property type="entry name" value="HAD superfamily/HAD-like"/>
    <property type="match status" value="1"/>
</dbReference>
<dbReference type="Gene3D" id="1.10.150.210">
    <property type="entry name" value="Phosphoserine phosphatase, domain 2"/>
    <property type="match status" value="1"/>
</dbReference>
<dbReference type="InterPro" id="IPR050582">
    <property type="entry name" value="HAD-like_SerB"/>
</dbReference>
<dbReference type="InterPro" id="IPR036412">
    <property type="entry name" value="HAD-like_sf"/>
</dbReference>
<dbReference type="InterPro" id="IPR023214">
    <property type="entry name" value="HAD_sf"/>
</dbReference>
<dbReference type="InterPro" id="IPR004469">
    <property type="entry name" value="PSP"/>
</dbReference>
<dbReference type="InterPro" id="IPR041449">
    <property type="entry name" value="SerB_N"/>
</dbReference>
<dbReference type="NCBIfam" id="TIGR01488">
    <property type="entry name" value="HAD-SF-IB"/>
    <property type="match status" value="1"/>
</dbReference>
<dbReference type="NCBIfam" id="NF008350">
    <property type="entry name" value="PRK11133.1"/>
    <property type="match status" value="1"/>
</dbReference>
<dbReference type="NCBIfam" id="TIGR00338">
    <property type="entry name" value="serB"/>
    <property type="match status" value="1"/>
</dbReference>
<dbReference type="PANTHER" id="PTHR43344">
    <property type="entry name" value="PHOSPHOSERINE PHOSPHATASE"/>
    <property type="match status" value="1"/>
</dbReference>
<dbReference type="PANTHER" id="PTHR43344:SF2">
    <property type="entry name" value="PHOSPHOSERINE PHOSPHATASE"/>
    <property type="match status" value="1"/>
</dbReference>
<dbReference type="Pfam" id="PF18429">
    <property type="entry name" value="DUF5609"/>
    <property type="match status" value="1"/>
</dbReference>
<dbReference type="Pfam" id="PF00702">
    <property type="entry name" value="Hydrolase"/>
    <property type="match status" value="1"/>
</dbReference>
<dbReference type="SFLD" id="SFLDG01137">
    <property type="entry name" value="C1.6.1:_Phosphoserine_Phosphat"/>
    <property type="match status" value="1"/>
</dbReference>
<dbReference type="SFLD" id="SFLDF00029">
    <property type="entry name" value="phosphoserine_phosphatase"/>
    <property type="match status" value="1"/>
</dbReference>
<dbReference type="SUPFAM" id="SSF56784">
    <property type="entry name" value="HAD-like"/>
    <property type="match status" value="1"/>
</dbReference>
<comment type="catalytic activity">
    <reaction evidence="2">
        <text>O-phospho-L-serine + H2O = L-serine + phosphate</text>
        <dbReference type="Rhea" id="RHEA:21208"/>
        <dbReference type="ChEBI" id="CHEBI:15377"/>
        <dbReference type="ChEBI" id="CHEBI:33384"/>
        <dbReference type="ChEBI" id="CHEBI:43474"/>
        <dbReference type="ChEBI" id="CHEBI:57524"/>
        <dbReference type="EC" id="3.1.3.3"/>
    </reaction>
</comment>
<comment type="catalytic activity">
    <reaction evidence="2">
        <text>O-phospho-D-serine + H2O = D-serine + phosphate</text>
        <dbReference type="Rhea" id="RHEA:24873"/>
        <dbReference type="ChEBI" id="CHEBI:15377"/>
        <dbReference type="ChEBI" id="CHEBI:35247"/>
        <dbReference type="ChEBI" id="CHEBI:43474"/>
        <dbReference type="ChEBI" id="CHEBI:58680"/>
        <dbReference type="EC" id="3.1.3.3"/>
    </reaction>
</comment>
<comment type="cofactor">
    <cofactor evidence="2">
        <name>Mg(2+)</name>
        <dbReference type="ChEBI" id="CHEBI:18420"/>
    </cofactor>
</comment>
<comment type="pathway">
    <text evidence="3">Amino-acid biosynthesis; L-serine biosynthesis; L-serine from 3-phospho-D-glycerate: step 3/3.</text>
</comment>
<comment type="similarity">
    <text evidence="3">Belongs to the HAD-like hydrolase superfamily. SerB family.</text>
</comment>
<evidence type="ECO:0000250" key="1">
    <source>
        <dbReference type="UniProtKB" id="Q58989"/>
    </source>
</evidence>
<evidence type="ECO:0000269" key="2">
    <source>
    </source>
</evidence>
<evidence type="ECO:0000305" key="3"/>
<evidence type="ECO:0000305" key="4">
    <source>
    </source>
</evidence>
<evidence type="ECO:0000312" key="5">
    <source>
        <dbReference type="EMBL" id="AAF95488.1"/>
    </source>
</evidence>
<evidence type="ECO:0000312" key="6">
    <source>
        <dbReference type="Proteomes" id="UP000000584"/>
    </source>
</evidence>
<evidence type="ECO:0007744" key="7">
    <source>
        <dbReference type="PDB" id="3N28"/>
    </source>
</evidence>
<evidence type="ECO:0007829" key="8">
    <source>
        <dbReference type="PDB" id="3N28"/>
    </source>
</evidence>
<organism evidence="6">
    <name type="scientific">Vibrio cholerae serotype O1 (strain ATCC 39315 / El Tor Inaba N16961)</name>
    <dbReference type="NCBI Taxonomy" id="243277"/>
    <lineage>
        <taxon>Bacteria</taxon>
        <taxon>Pseudomonadati</taxon>
        <taxon>Pseudomonadota</taxon>
        <taxon>Gammaproteobacteria</taxon>
        <taxon>Vibrionales</taxon>
        <taxon>Vibrionaceae</taxon>
        <taxon>Vibrio</taxon>
    </lineage>
</organism>
<sequence>MDMDALTTLPIKKHTALLNRFPETRFVTQLAKKRASWIVFGHYLTPAQFEDMDFFTNRFNAILDMWKVGRYEVALMDGELTSEHETILKALELDYARIQDVPDLTKPGLIVLDMDSTAIQIECIDEIAKLAGVGEEVAEVTERAMQGELDFEQSLRLRVSKLKDAPEQILSQVRETLPLMPELPELVATLHAFGWKVAIASGGFTYFSDYLKEQLSLDYAQSNTLEIVSGKLTGQVLGEVVSAQTKADILLTLAQQYDVEIHNTVAVGDGANDLVMMAAAGLGVAYHAKPKVEAKAQTAVRFAGLGGVVCILSAALVAQQKLSWKSKP</sequence>
<protein>
    <recommendedName>
        <fullName evidence="4">Phosphoserine phosphatase</fullName>
        <shortName evidence="1">PSP</shortName>
        <shortName evidence="1">PSPase</shortName>
        <ecNumber evidence="2">3.1.3.3</ecNumber>
    </recommendedName>
    <alternativeName>
        <fullName evidence="1">O-phosphoserine phosphohydrolase</fullName>
    </alternativeName>
</protein>
<gene>
    <name evidence="5" type="ordered locus">VC_2345</name>
</gene>
<proteinExistence type="evidence at protein level"/>